<evidence type="ECO:0000255" key="1">
    <source>
        <dbReference type="HAMAP-Rule" id="MF_00080"/>
    </source>
</evidence>
<proteinExistence type="inferred from homology"/>
<keyword id="KW-0963">Cytoplasm</keyword>
<keyword id="KW-0396">Initiation factor</keyword>
<keyword id="KW-0648">Protein biosynthesis</keyword>
<reference key="1">
    <citation type="journal article" date="2001" name="Microb. Drug Resist.">
        <title>Annotated draft genomic sequence from a Streptococcus pneumoniae type 19F clinical isolate.</title>
        <authorList>
            <person name="Dopazo J."/>
            <person name="Mendoza A."/>
            <person name="Herrero J."/>
            <person name="Caldara F."/>
            <person name="Humbert Y."/>
            <person name="Friedli L."/>
            <person name="Guerrier M."/>
            <person name="Grand-Schenk E."/>
            <person name="Gandin C."/>
            <person name="de Francesco M."/>
            <person name="Polissi A."/>
            <person name="Buell G."/>
            <person name="Feger G."/>
            <person name="Garcia E."/>
            <person name="Peitsch M."/>
            <person name="Garcia-Bustos J.F."/>
        </authorList>
    </citation>
    <scope>NUCLEOTIDE SEQUENCE [LARGE SCALE GENOMIC DNA]</scope>
    <source>
        <strain>G54</strain>
    </source>
</reference>
<reference key="2">
    <citation type="submission" date="2008-03" db="EMBL/GenBank/DDBJ databases">
        <title>Pneumococcal beta glucoside metabolism investigated by whole genome comparison.</title>
        <authorList>
            <person name="Mulas L."/>
            <person name="Trappetti C."/>
            <person name="Hakenbeck R."/>
            <person name="Iannelli F."/>
            <person name="Pozzi G."/>
            <person name="Davidsen T.M."/>
            <person name="Tettelin H."/>
            <person name="Oggioni M."/>
        </authorList>
    </citation>
    <scope>NUCLEOTIDE SEQUENCE [LARGE SCALE GENOMIC DNA]</scope>
    <source>
        <strain>G54</strain>
    </source>
</reference>
<name>IF3_STRP4</name>
<comment type="function">
    <text evidence="1">IF-3 binds to the 30S ribosomal subunit and shifts the equilibrium between 70S ribosomes and their 50S and 30S subunits in favor of the free subunits, thus enhancing the availability of 30S subunits on which protein synthesis initiation begins.</text>
</comment>
<comment type="subunit">
    <text evidence="1">Monomer.</text>
</comment>
<comment type="subcellular location">
    <subcellularLocation>
        <location evidence="1">Cytoplasm</location>
    </subcellularLocation>
</comment>
<comment type="similarity">
    <text evidence="1">Belongs to the IF-3 family.</text>
</comment>
<dbReference type="EMBL" id="CP001015">
    <property type="protein sequence ID" value="ACF55383.1"/>
    <property type="molecule type" value="Genomic_DNA"/>
</dbReference>
<dbReference type="KEGG" id="spx:SPG_0883"/>
<dbReference type="HOGENOM" id="CLU_054919_3_2_9"/>
<dbReference type="GO" id="GO:0005829">
    <property type="term" value="C:cytosol"/>
    <property type="evidence" value="ECO:0007669"/>
    <property type="project" value="TreeGrafter"/>
</dbReference>
<dbReference type="GO" id="GO:0016020">
    <property type="term" value="C:membrane"/>
    <property type="evidence" value="ECO:0007669"/>
    <property type="project" value="TreeGrafter"/>
</dbReference>
<dbReference type="GO" id="GO:0043022">
    <property type="term" value="F:ribosome binding"/>
    <property type="evidence" value="ECO:0007669"/>
    <property type="project" value="TreeGrafter"/>
</dbReference>
<dbReference type="GO" id="GO:0003743">
    <property type="term" value="F:translation initiation factor activity"/>
    <property type="evidence" value="ECO:0007669"/>
    <property type="project" value="UniProtKB-UniRule"/>
</dbReference>
<dbReference type="GO" id="GO:0032790">
    <property type="term" value="P:ribosome disassembly"/>
    <property type="evidence" value="ECO:0007669"/>
    <property type="project" value="TreeGrafter"/>
</dbReference>
<dbReference type="FunFam" id="3.10.20.80:FF:000001">
    <property type="entry name" value="Translation initiation factor IF-3"/>
    <property type="match status" value="1"/>
</dbReference>
<dbReference type="FunFam" id="3.30.110.10:FF:000001">
    <property type="entry name" value="Translation initiation factor IF-3"/>
    <property type="match status" value="1"/>
</dbReference>
<dbReference type="Gene3D" id="3.30.110.10">
    <property type="entry name" value="Translation initiation factor 3 (IF-3), C-terminal domain"/>
    <property type="match status" value="1"/>
</dbReference>
<dbReference type="Gene3D" id="3.10.20.80">
    <property type="entry name" value="Translation initiation factor 3 (IF-3), N-terminal domain"/>
    <property type="match status" value="1"/>
</dbReference>
<dbReference type="HAMAP" id="MF_00080">
    <property type="entry name" value="IF_3"/>
    <property type="match status" value="1"/>
</dbReference>
<dbReference type="InterPro" id="IPR036788">
    <property type="entry name" value="T_IF-3_C_sf"/>
</dbReference>
<dbReference type="InterPro" id="IPR036787">
    <property type="entry name" value="T_IF-3_N_sf"/>
</dbReference>
<dbReference type="InterPro" id="IPR019813">
    <property type="entry name" value="Translation_initiation_fac3_CS"/>
</dbReference>
<dbReference type="InterPro" id="IPR001288">
    <property type="entry name" value="Translation_initiation_fac_3"/>
</dbReference>
<dbReference type="InterPro" id="IPR019815">
    <property type="entry name" value="Translation_initiation_fac_3_C"/>
</dbReference>
<dbReference type="InterPro" id="IPR019814">
    <property type="entry name" value="Translation_initiation_fac_3_N"/>
</dbReference>
<dbReference type="NCBIfam" id="TIGR00168">
    <property type="entry name" value="infC"/>
    <property type="match status" value="1"/>
</dbReference>
<dbReference type="PANTHER" id="PTHR10938">
    <property type="entry name" value="TRANSLATION INITIATION FACTOR IF-3"/>
    <property type="match status" value="1"/>
</dbReference>
<dbReference type="PANTHER" id="PTHR10938:SF0">
    <property type="entry name" value="TRANSLATION INITIATION FACTOR IF-3, MITOCHONDRIAL"/>
    <property type="match status" value="1"/>
</dbReference>
<dbReference type="Pfam" id="PF00707">
    <property type="entry name" value="IF3_C"/>
    <property type="match status" value="1"/>
</dbReference>
<dbReference type="Pfam" id="PF05198">
    <property type="entry name" value="IF3_N"/>
    <property type="match status" value="1"/>
</dbReference>
<dbReference type="SUPFAM" id="SSF55200">
    <property type="entry name" value="Translation initiation factor IF3, C-terminal domain"/>
    <property type="match status" value="1"/>
</dbReference>
<dbReference type="SUPFAM" id="SSF54364">
    <property type="entry name" value="Translation initiation factor IF3, N-terminal domain"/>
    <property type="match status" value="1"/>
</dbReference>
<dbReference type="PROSITE" id="PS00938">
    <property type="entry name" value="IF3"/>
    <property type="match status" value="1"/>
</dbReference>
<accession>B5E478</accession>
<organism>
    <name type="scientific">Streptococcus pneumoniae serotype 19F (strain G54)</name>
    <dbReference type="NCBI Taxonomy" id="512566"/>
    <lineage>
        <taxon>Bacteria</taxon>
        <taxon>Bacillati</taxon>
        <taxon>Bacillota</taxon>
        <taxon>Bacilli</taxon>
        <taxon>Lactobacillales</taxon>
        <taxon>Streptococcaceae</taxon>
        <taxon>Streptococcus</taxon>
    </lineage>
</organism>
<feature type="chain" id="PRO_1000092785" description="Translation initiation factor IF-3">
    <location>
        <begin position="1"/>
        <end position="185"/>
    </location>
</feature>
<protein>
    <recommendedName>
        <fullName evidence="1">Translation initiation factor IF-3</fullName>
    </recommendedName>
</protein>
<sequence>MFFSNKTKEVKTIAKQDLFIXDEIRVREVRLIGLEGEQLGIKPLSEAQALADNANVDLVLIQPQAKPPVAKIMDYGKFKFEYQKKQKEQRKKQSVVTVKEVRLSPTIDKGDFDTKLRNARKFLEKGNKVKVSIRFKGRMITHKEIGAKVLAEFAEATQDIAIIEQRAKMDGRQMFMQLAPATDKK</sequence>
<gene>
    <name evidence="1" type="primary">infC</name>
    <name type="ordered locus">SPG_0883</name>
</gene>